<proteinExistence type="inferred from homology"/>
<evidence type="ECO:0000255" key="1">
    <source>
        <dbReference type="HAMAP-Rule" id="MF_01454"/>
    </source>
</evidence>
<evidence type="ECO:0000255" key="2">
    <source>
        <dbReference type="PROSITE-ProRule" id="PRU01229"/>
    </source>
</evidence>
<evidence type="ECO:0000255" key="3">
    <source>
        <dbReference type="PROSITE-ProRule" id="PRU01231"/>
    </source>
</evidence>
<reference key="1">
    <citation type="journal article" date="2011" name="PLoS Genet.">
        <title>The evolution of host specialization in the vertebrate gut symbiont Lactobacillus reuteri.</title>
        <authorList>
            <person name="Frese S.A."/>
            <person name="Benson A.K."/>
            <person name="Tannock G.W."/>
            <person name="Loach D.M."/>
            <person name="Kim J."/>
            <person name="Zhang M."/>
            <person name="Oh P.L."/>
            <person name="Heng N.C."/>
            <person name="Patil P.B."/>
            <person name="Juge N."/>
            <person name="Mackenzie D.A."/>
            <person name="Pearson B.M."/>
            <person name="Lapidus A."/>
            <person name="Dalin E."/>
            <person name="Tice H."/>
            <person name="Goltsman E."/>
            <person name="Land M."/>
            <person name="Hauser L."/>
            <person name="Ivanova N."/>
            <person name="Kyrpides N.C."/>
            <person name="Walter J."/>
        </authorList>
    </citation>
    <scope>NUCLEOTIDE SEQUENCE [LARGE SCALE GENOMIC DNA]</scope>
    <source>
        <strain>DSM 20016</strain>
    </source>
</reference>
<protein>
    <recommendedName>
        <fullName evidence="1">GTPase Obg</fullName>
        <ecNumber evidence="1">3.6.5.-</ecNumber>
    </recommendedName>
    <alternativeName>
        <fullName evidence="1">GTP-binding protein Obg</fullName>
    </alternativeName>
</protein>
<accession>A5VJ99</accession>
<name>OBG_LIMRD</name>
<feature type="chain" id="PRO_0000386000" description="GTPase Obg">
    <location>
        <begin position="1"/>
        <end position="438"/>
    </location>
</feature>
<feature type="domain" description="Obg" evidence="3">
    <location>
        <begin position="2"/>
        <end position="160"/>
    </location>
</feature>
<feature type="domain" description="OBG-type G" evidence="1">
    <location>
        <begin position="161"/>
        <end position="337"/>
    </location>
</feature>
<feature type="domain" description="OCT" evidence="2">
    <location>
        <begin position="360"/>
        <end position="438"/>
    </location>
</feature>
<feature type="binding site" evidence="1">
    <location>
        <begin position="167"/>
        <end position="174"/>
    </location>
    <ligand>
        <name>GTP</name>
        <dbReference type="ChEBI" id="CHEBI:37565"/>
    </ligand>
</feature>
<feature type="binding site" evidence="1">
    <location>
        <position position="174"/>
    </location>
    <ligand>
        <name>Mg(2+)</name>
        <dbReference type="ChEBI" id="CHEBI:18420"/>
    </ligand>
</feature>
<feature type="binding site" evidence="1">
    <location>
        <begin position="192"/>
        <end position="196"/>
    </location>
    <ligand>
        <name>GTP</name>
        <dbReference type="ChEBI" id="CHEBI:37565"/>
    </ligand>
</feature>
<feature type="binding site" evidence="1">
    <location>
        <position position="194"/>
    </location>
    <ligand>
        <name>Mg(2+)</name>
        <dbReference type="ChEBI" id="CHEBI:18420"/>
    </ligand>
</feature>
<feature type="binding site" evidence="1">
    <location>
        <begin position="214"/>
        <end position="217"/>
    </location>
    <ligand>
        <name>GTP</name>
        <dbReference type="ChEBI" id="CHEBI:37565"/>
    </ligand>
</feature>
<feature type="binding site" evidence="1">
    <location>
        <begin position="284"/>
        <end position="287"/>
    </location>
    <ligand>
        <name>GTP</name>
        <dbReference type="ChEBI" id="CHEBI:37565"/>
    </ligand>
</feature>
<feature type="binding site" evidence="1">
    <location>
        <begin position="318"/>
        <end position="320"/>
    </location>
    <ligand>
        <name>GTP</name>
        <dbReference type="ChEBI" id="CHEBI:37565"/>
    </ligand>
</feature>
<comment type="function">
    <text evidence="1">An essential GTPase which binds GTP, GDP and possibly (p)ppGpp with moderate affinity, with high nucleotide exchange rates and a fairly low GTP hydrolysis rate. Plays a role in control of the cell cycle, stress response, ribosome biogenesis and in those bacteria that undergo differentiation, in morphogenesis control.</text>
</comment>
<comment type="cofactor">
    <cofactor evidence="1">
        <name>Mg(2+)</name>
        <dbReference type="ChEBI" id="CHEBI:18420"/>
    </cofactor>
</comment>
<comment type="subunit">
    <text evidence="1">Monomer.</text>
</comment>
<comment type="subcellular location">
    <subcellularLocation>
        <location evidence="1">Cytoplasm</location>
    </subcellularLocation>
</comment>
<comment type="similarity">
    <text evidence="1">Belongs to the TRAFAC class OBG-HflX-like GTPase superfamily. OBG GTPase family.</text>
</comment>
<sequence>MNMFVDQIKIEVHAGKGGDGMVAFRREKYVPNGGPAGGDGGRGGSIILKVDEGLRTLMDFRYHRIFKAKNGGNGMSKQMTGPSAEDTIIAVPQGTTVRDLDTGKIIGDLVEKDQELVVAKGGRGGRGNIHFASAKNPAPEIAENGEPGEDHYLELELKMLADVGLIGFPSVGKSTLLSVVTGAKPKIAAYEFTTLTPNLGMVMLPDGRDFAMADMPGLIEGASKGIGLGLKFLRHIERTRVLLHLVDMSSEDPHQAIERYRQINKELADYDPELLKRPQIVVATKMDLPNSADNLAAFKADLAADKTLEKQPEIFPISAVTHQGVQQLMQLTADLLDKTPAFDSESHDKELVAEYRAAAPDKKDEADFTITKDEDGTWVLGGEKLIRLFKMTDLTHEESQLRFARQLRHMGVDDALRAKGVQDGDLVRIEKFVFEFIQ</sequence>
<gene>
    <name evidence="1" type="primary">obg</name>
    <name type="ordered locus">Lreu_0658</name>
</gene>
<keyword id="KW-0963">Cytoplasm</keyword>
<keyword id="KW-0342">GTP-binding</keyword>
<keyword id="KW-0378">Hydrolase</keyword>
<keyword id="KW-0460">Magnesium</keyword>
<keyword id="KW-0479">Metal-binding</keyword>
<keyword id="KW-0547">Nucleotide-binding</keyword>
<keyword id="KW-1185">Reference proteome</keyword>
<organism>
    <name type="scientific">Limosilactobacillus reuteri (strain DSM 20016)</name>
    <name type="common">Lactobacillus reuteri</name>
    <dbReference type="NCBI Taxonomy" id="557436"/>
    <lineage>
        <taxon>Bacteria</taxon>
        <taxon>Bacillati</taxon>
        <taxon>Bacillota</taxon>
        <taxon>Bacilli</taxon>
        <taxon>Lactobacillales</taxon>
        <taxon>Lactobacillaceae</taxon>
        <taxon>Limosilactobacillus</taxon>
    </lineage>
</organism>
<dbReference type="EC" id="3.6.5.-" evidence="1"/>
<dbReference type="EMBL" id="CP000705">
    <property type="protein sequence ID" value="ABQ82923.1"/>
    <property type="molecule type" value="Genomic_DNA"/>
</dbReference>
<dbReference type="RefSeq" id="WP_003668233.1">
    <property type="nucleotide sequence ID" value="NC_009513.1"/>
</dbReference>
<dbReference type="SMR" id="A5VJ99"/>
<dbReference type="STRING" id="557436.Lreu_0658"/>
<dbReference type="KEGG" id="lre:Lreu_0658"/>
<dbReference type="PATRIC" id="fig|557436.17.peg.730"/>
<dbReference type="eggNOG" id="COG0536">
    <property type="taxonomic scope" value="Bacteria"/>
</dbReference>
<dbReference type="HOGENOM" id="CLU_011747_2_1_9"/>
<dbReference type="OMA" id="VVFDWEP"/>
<dbReference type="Proteomes" id="UP000001991">
    <property type="component" value="Chromosome"/>
</dbReference>
<dbReference type="GO" id="GO:0005737">
    <property type="term" value="C:cytoplasm"/>
    <property type="evidence" value="ECO:0007669"/>
    <property type="project" value="UniProtKB-SubCell"/>
</dbReference>
<dbReference type="GO" id="GO:0005525">
    <property type="term" value="F:GTP binding"/>
    <property type="evidence" value="ECO:0007669"/>
    <property type="project" value="UniProtKB-UniRule"/>
</dbReference>
<dbReference type="GO" id="GO:0003924">
    <property type="term" value="F:GTPase activity"/>
    <property type="evidence" value="ECO:0007669"/>
    <property type="project" value="UniProtKB-UniRule"/>
</dbReference>
<dbReference type="GO" id="GO:0000287">
    <property type="term" value="F:magnesium ion binding"/>
    <property type="evidence" value="ECO:0007669"/>
    <property type="project" value="InterPro"/>
</dbReference>
<dbReference type="GO" id="GO:0042254">
    <property type="term" value="P:ribosome biogenesis"/>
    <property type="evidence" value="ECO:0007669"/>
    <property type="project" value="UniProtKB-UniRule"/>
</dbReference>
<dbReference type="CDD" id="cd01898">
    <property type="entry name" value="Obg"/>
    <property type="match status" value="1"/>
</dbReference>
<dbReference type="FunFam" id="2.70.210.12:FF:000001">
    <property type="entry name" value="GTPase Obg"/>
    <property type="match status" value="1"/>
</dbReference>
<dbReference type="Gene3D" id="3.30.300.350">
    <property type="entry name" value="GTP-binding protein OBG, C-terminal domain"/>
    <property type="match status" value="1"/>
</dbReference>
<dbReference type="Gene3D" id="2.70.210.12">
    <property type="entry name" value="GTP1/OBG domain"/>
    <property type="match status" value="1"/>
</dbReference>
<dbReference type="Gene3D" id="3.40.50.300">
    <property type="entry name" value="P-loop containing nucleotide triphosphate hydrolases"/>
    <property type="match status" value="1"/>
</dbReference>
<dbReference type="HAMAP" id="MF_01454">
    <property type="entry name" value="GTPase_Obg"/>
    <property type="match status" value="1"/>
</dbReference>
<dbReference type="InterPro" id="IPR031167">
    <property type="entry name" value="G_OBG"/>
</dbReference>
<dbReference type="InterPro" id="IPR006073">
    <property type="entry name" value="GTP-bd"/>
</dbReference>
<dbReference type="InterPro" id="IPR014100">
    <property type="entry name" value="GTP-bd_Obg/CgtA"/>
</dbReference>
<dbReference type="InterPro" id="IPR036346">
    <property type="entry name" value="GTP-bd_prot_GTP1/OBG_C_sf"/>
</dbReference>
<dbReference type="InterPro" id="IPR006074">
    <property type="entry name" value="GTP1-OBG_CS"/>
</dbReference>
<dbReference type="InterPro" id="IPR006169">
    <property type="entry name" value="GTP1_OBG_dom"/>
</dbReference>
<dbReference type="InterPro" id="IPR036726">
    <property type="entry name" value="GTP1_OBG_dom_sf"/>
</dbReference>
<dbReference type="InterPro" id="IPR045086">
    <property type="entry name" value="OBG_GTPase"/>
</dbReference>
<dbReference type="InterPro" id="IPR015349">
    <property type="entry name" value="OCT_dom"/>
</dbReference>
<dbReference type="InterPro" id="IPR027417">
    <property type="entry name" value="P-loop_NTPase"/>
</dbReference>
<dbReference type="NCBIfam" id="TIGR02729">
    <property type="entry name" value="Obg_CgtA"/>
    <property type="match status" value="1"/>
</dbReference>
<dbReference type="NCBIfam" id="TIGR03595">
    <property type="entry name" value="Obg_CgtA_exten"/>
    <property type="match status" value="1"/>
</dbReference>
<dbReference type="NCBIfam" id="NF008954">
    <property type="entry name" value="PRK12296.1"/>
    <property type="match status" value="1"/>
</dbReference>
<dbReference type="NCBIfam" id="NF008955">
    <property type="entry name" value="PRK12297.1"/>
    <property type="match status" value="1"/>
</dbReference>
<dbReference type="NCBIfam" id="NF008956">
    <property type="entry name" value="PRK12299.1"/>
    <property type="match status" value="1"/>
</dbReference>
<dbReference type="PANTHER" id="PTHR11702">
    <property type="entry name" value="DEVELOPMENTALLY REGULATED GTP-BINDING PROTEIN-RELATED"/>
    <property type="match status" value="1"/>
</dbReference>
<dbReference type="PANTHER" id="PTHR11702:SF31">
    <property type="entry name" value="MITOCHONDRIAL RIBOSOME-ASSOCIATED GTPASE 2"/>
    <property type="match status" value="1"/>
</dbReference>
<dbReference type="Pfam" id="PF09269">
    <property type="entry name" value="DUF1967"/>
    <property type="match status" value="1"/>
</dbReference>
<dbReference type="Pfam" id="PF01018">
    <property type="entry name" value="GTP1_OBG"/>
    <property type="match status" value="1"/>
</dbReference>
<dbReference type="Pfam" id="PF01926">
    <property type="entry name" value="MMR_HSR1"/>
    <property type="match status" value="1"/>
</dbReference>
<dbReference type="PIRSF" id="PIRSF002401">
    <property type="entry name" value="GTP_bd_Obg/CgtA"/>
    <property type="match status" value="1"/>
</dbReference>
<dbReference type="PRINTS" id="PR00326">
    <property type="entry name" value="GTP1OBG"/>
</dbReference>
<dbReference type="SUPFAM" id="SSF102741">
    <property type="entry name" value="Obg GTP-binding protein C-terminal domain"/>
    <property type="match status" value="1"/>
</dbReference>
<dbReference type="SUPFAM" id="SSF82051">
    <property type="entry name" value="Obg GTP-binding protein N-terminal domain"/>
    <property type="match status" value="1"/>
</dbReference>
<dbReference type="SUPFAM" id="SSF52540">
    <property type="entry name" value="P-loop containing nucleoside triphosphate hydrolases"/>
    <property type="match status" value="1"/>
</dbReference>
<dbReference type="PROSITE" id="PS51710">
    <property type="entry name" value="G_OBG"/>
    <property type="match status" value="1"/>
</dbReference>
<dbReference type="PROSITE" id="PS00905">
    <property type="entry name" value="GTP1_OBG"/>
    <property type="match status" value="1"/>
</dbReference>
<dbReference type="PROSITE" id="PS51883">
    <property type="entry name" value="OBG"/>
    <property type="match status" value="1"/>
</dbReference>
<dbReference type="PROSITE" id="PS51881">
    <property type="entry name" value="OCT"/>
    <property type="match status" value="1"/>
</dbReference>